<protein>
    <recommendedName>
        <fullName evidence="5">Probable E3 ubiquitin-protein ligase RHY1A</fullName>
        <ecNumber>2.3.2.27</ecNumber>
    </recommendedName>
    <alternativeName>
        <fullName evidence="4">RING-H2 finger Y1a</fullName>
    </alternativeName>
    <alternativeName>
        <fullName evidence="5">RING-H2 zinc finger protein RHY1a</fullName>
    </alternativeName>
    <alternativeName>
        <fullName evidence="5">RING-type E3 ubiquitin transferase RHY1A</fullName>
    </alternativeName>
</protein>
<accession>Q852U6</accession>
<accession>Q8LD21</accession>
<accession>Q9C6C9</accession>
<accession>Q9ZT39</accession>
<comment type="function">
    <text evidence="1">Probable E3 ubiquitin-protein ligase that may possess E3 ubiquitin ligase activity in vitro.</text>
</comment>
<comment type="catalytic activity">
    <reaction>
        <text>S-ubiquitinyl-[E2 ubiquitin-conjugating enzyme]-L-cysteine + [acceptor protein]-L-lysine = [E2 ubiquitin-conjugating enzyme]-L-cysteine + N(6)-ubiquitinyl-[acceptor protein]-L-lysine.</text>
        <dbReference type="EC" id="2.3.2.27"/>
    </reaction>
</comment>
<comment type="pathway">
    <text evidence="5">Protein modification; protein ubiquitination.</text>
</comment>
<comment type="interaction">
    <interactant intactId="EBI-4428791">
        <id>Q852U6</id>
    </interactant>
    <interactant intactId="EBI-4426649">
        <id>Q17TI5</id>
        <label>BRX</label>
    </interactant>
    <organismsDiffer>false</organismsDiffer>
    <experiments>4</experiments>
</comment>
<comment type="sequence caution" evidence="5">
    <conflict type="erroneous gene model prediction">
        <sequence resource="EMBL-CDS" id="AAG51778"/>
    </conflict>
</comment>
<sequence>MTSASELFSTRRSRPGRSDPALESDTSSYRHHSHHHHRRHGVHHHNQRHDSDGCDPLRRPTPRLRRFFHHPIQERSRPIRDVQGTSQYLNTDSTDTETQSSSFVNLNGSERLPGAVLLARDRLFERLRGVSLSSNSRSNRVSLDDQRESSFHSIDGDPIFQLAGLQVTYECNKKPQGLTQDAINCLHRQTFSSAEVKSEMRDCSICLESFTKGDMLISLPCTHSFHSSCLNPWLRACGDCPCCRRAIAKE</sequence>
<name>RHY1A_ARATH</name>
<keyword id="KW-0479">Metal-binding</keyword>
<keyword id="KW-1185">Reference proteome</keyword>
<keyword id="KW-0808">Transferase</keyword>
<keyword id="KW-0833">Ubl conjugation pathway</keyword>
<keyword id="KW-0862">Zinc</keyword>
<keyword id="KW-0863">Zinc-finger</keyword>
<organism>
    <name type="scientific">Arabidopsis thaliana</name>
    <name type="common">Mouse-ear cress</name>
    <dbReference type="NCBI Taxonomy" id="3702"/>
    <lineage>
        <taxon>Eukaryota</taxon>
        <taxon>Viridiplantae</taxon>
        <taxon>Streptophyta</taxon>
        <taxon>Embryophyta</taxon>
        <taxon>Tracheophyta</taxon>
        <taxon>Spermatophyta</taxon>
        <taxon>Magnoliopsida</taxon>
        <taxon>eudicotyledons</taxon>
        <taxon>Gunneridae</taxon>
        <taxon>Pentapetalae</taxon>
        <taxon>rosids</taxon>
        <taxon>malvids</taxon>
        <taxon>Brassicales</taxon>
        <taxon>Brassicaceae</taxon>
        <taxon>Camelineae</taxon>
        <taxon>Arabidopsis</taxon>
    </lineage>
</organism>
<reference key="1">
    <citation type="journal article" date="2000" name="Nature">
        <title>Sequence and analysis of chromosome 1 of the plant Arabidopsis thaliana.</title>
        <authorList>
            <person name="Theologis A."/>
            <person name="Ecker J.R."/>
            <person name="Palm C.J."/>
            <person name="Federspiel N.A."/>
            <person name="Kaul S."/>
            <person name="White O."/>
            <person name="Alonso J."/>
            <person name="Altafi H."/>
            <person name="Araujo R."/>
            <person name="Bowman C.L."/>
            <person name="Brooks S.Y."/>
            <person name="Buehler E."/>
            <person name="Chan A."/>
            <person name="Chao Q."/>
            <person name="Chen H."/>
            <person name="Cheuk R.F."/>
            <person name="Chin C.W."/>
            <person name="Chung M.K."/>
            <person name="Conn L."/>
            <person name="Conway A.B."/>
            <person name="Conway A.R."/>
            <person name="Creasy T.H."/>
            <person name="Dewar K."/>
            <person name="Dunn P."/>
            <person name="Etgu P."/>
            <person name="Feldblyum T.V."/>
            <person name="Feng J.-D."/>
            <person name="Fong B."/>
            <person name="Fujii C.Y."/>
            <person name="Gill J.E."/>
            <person name="Goldsmith A.D."/>
            <person name="Haas B."/>
            <person name="Hansen N.F."/>
            <person name="Hughes B."/>
            <person name="Huizar L."/>
            <person name="Hunter J.L."/>
            <person name="Jenkins J."/>
            <person name="Johnson-Hopson C."/>
            <person name="Khan S."/>
            <person name="Khaykin E."/>
            <person name="Kim C.J."/>
            <person name="Koo H.L."/>
            <person name="Kremenetskaia I."/>
            <person name="Kurtz D.B."/>
            <person name="Kwan A."/>
            <person name="Lam B."/>
            <person name="Langin-Hooper S."/>
            <person name="Lee A."/>
            <person name="Lee J.M."/>
            <person name="Lenz C.A."/>
            <person name="Li J.H."/>
            <person name="Li Y.-P."/>
            <person name="Lin X."/>
            <person name="Liu S.X."/>
            <person name="Liu Z.A."/>
            <person name="Luros J.S."/>
            <person name="Maiti R."/>
            <person name="Marziali A."/>
            <person name="Militscher J."/>
            <person name="Miranda M."/>
            <person name="Nguyen M."/>
            <person name="Nierman W.C."/>
            <person name="Osborne B.I."/>
            <person name="Pai G."/>
            <person name="Peterson J."/>
            <person name="Pham P.K."/>
            <person name="Rizzo M."/>
            <person name="Rooney T."/>
            <person name="Rowley D."/>
            <person name="Sakano H."/>
            <person name="Salzberg S.L."/>
            <person name="Schwartz J.R."/>
            <person name="Shinn P."/>
            <person name="Southwick A.M."/>
            <person name="Sun H."/>
            <person name="Tallon L.J."/>
            <person name="Tambunga G."/>
            <person name="Toriumi M.J."/>
            <person name="Town C.D."/>
            <person name="Utterback T."/>
            <person name="Van Aken S."/>
            <person name="Vaysberg M."/>
            <person name="Vysotskaia V.S."/>
            <person name="Walker M."/>
            <person name="Wu D."/>
            <person name="Yu G."/>
            <person name="Fraser C.M."/>
            <person name="Venter J.C."/>
            <person name="Davis R.W."/>
        </authorList>
    </citation>
    <scope>NUCLEOTIDE SEQUENCE [LARGE SCALE GENOMIC DNA]</scope>
    <source>
        <strain>cv. Columbia</strain>
    </source>
</reference>
<reference key="2">
    <citation type="journal article" date="2017" name="Plant J.">
        <title>Araport11: a complete reannotation of the Arabidopsis thaliana reference genome.</title>
        <authorList>
            <person name="Cheng C.Y."/>
            <person name="Krishnakumar V."/>
            <person name="Chan A.P."/>
            <person name="Thibaud-Nissen F."/>
            <person name="Schobel S."/>
            <person name="Town C.D."/>
        </authorList>
    </citation>
    <scope>GENOME REANNOTATION</scope>
    <source>
        <strain>cv. Columbia</strain>
    </source>
</reference>
<reference key="3">
    <citation type="journal article" date="2003" name="Science">
        <title>Empirical analysis of transcriptional activity in the Arabidopsis genome.</title>
        <authorList>
            <person name="Yamada K."/>
            <person name="Lim J."/>
            <person name="Dale J.M."/>
            <person name="Chen H."/>
            <person name="Shinn P."/>
            <person name="Palm C.J."/>
            <person name="Southwick A.M."/>
            <person name="Wu H.C."/>
            <person name="Kim C.J."/>
            <person name="Nguyen M."/>
            <person name="Pham P.K."/>
            <person name="Cheuk R.F."/>
            <person name="Karlin-Newmann G."/>
            <person name="Liu S.X."/>
            <person name="Lam B."/>
            <person name="Sakano H."/>
            <person name="Wu T."/>
            <person name="Yu G."/>
            <person name="Miranda M."/>
            <person name="Quach H.L."/>
            <person name="Tripp M."/>
            <person name="Chang C.H."/>
            <person name="Lee J.M."/>
            <person name="Toriumi M.J."/>
            <person name="Chan M.M."/>
            <person name="Tang C.C."/>
            <person name="Onodera C.S."/>
            <person name="Deng J.M."/>
            <person name="Akiyama K."/>
            <person name="Ansari Y."/>
            <person name="Arakawa T."/>
            <person name="Banh J."/>
            <person name="Banno F."/>
            <person name="Bowser L."/>
            <person name="Brooks S.Y."/>
            <person name="Carninci P."/>
            <person name="Chao Q."/>
            <person name="Choy N."/>
            <person name="Enju A."/>
            <person name="Goldsmith A.D."/>
            <person name="Gurjal M."/>
            <person name="Hansen N.F."/>
            <person name="Hayashizaki Y."/>
            <person name="Johnson-Hopson C."/>
            <person name="Hsuan V.W."/>
            <person name="Iida K."/>
            <person name="Karnes M."/>
            <person name="Khan S."/>
            <person name="Koesema E."/>
            <person name="Ishida J."/>
            <person name="Jiang P.X."/>
            <person name="Jones T."/>
            <person name="Kawai J."/>
            <person name="Kamiya A."/>
            <person name="Meyers C."/>
            <person name="Nakajima M."/>
            <person name="Narusaka M."/>
            <person name="Seki M."/>
            <person name="Sakurai T."/>
            <person name="Satou M."/>
            <person name="Tamse R."/>
            <person name="Vaysberg M."/>
            <person name="Wallender E.K."/>
            <person name="Wong C."/>
            <person name="Yamamura Y."/>
            <person name="Yuan S."/>
            <person name="Shinozaki K."/>
            <person name="Davis R.W."/>
            <person name="Theologis A."/>
            <person name="Ecker J.R."/>
        </authorList>
    </citation>
    <scope>NUCLEOTIDE SEQUENCE [LARGE SCALE MRNA]</scope>
    <source>
        <strain>cv. Columbia</strain>
    </source>
</reference>
<reference key="4">
    <citation type="submission" date="2006-07" db="EMBL/GenBank/DDBJ databases">
        <title>Large-scale analysis of RIKEN Arabidopsis full-length (RAFL) cDNAs.</title>
        <authorList>
            <person name="Totoki Y."/>
            <person name="Seki M."/>
            <person name="Ishida J."/>
            <person name="Nakajima M."/>
            <person name="Enju A."/>
            <person name="Kamiya A."/>
            <person name="Narusaka M."/>
            <person name="Shin-i T."/>
            <person name="Nakagawa M."/>
            <person name="Sakamoto N."/>
            <person name="Oishi K."/>
            <person name="Kohara Y."/>
            <person name="Kobayashi M."/>
            <person name="Toyoda A."/>
            <person name="Sakaki Y."/>
            <person name="Sakurai T."/>
            <person name="Iida K."/>
            <person name="Akiyama K."/>
            <person name="Satou M."/>
            <person name="Toyoda T."/>
            <person name="Konagaya A."/>
            <person name="Carninci P."/>
            <person name="Kawai J."/>
            <person name="Hayashizaki Y."/>
            <person name="Shinozaki K."/>
        </authorList>
    </citation>
    <scope>NUCLEOTIDE SEQUENCE [LARGE SCALE MRNA]</scope>
    <source>
        <strain>cv. Columbia</strain>
    </source>
</reference>
<reference key="5">
    <citation type="submission" date="2002-03" db="EMBL/GenBank/DDBJ databases">
        <title>Full-length cDNA from Arabidopsis thaliana.</title>
        <authorList>
            <person name="Brover V.V."/>
            <person name="Troukhan M.E."/>
            <person name="Alexandrov N.A."/>
            <person name="Lu Y.-P."/>
            <person name="Flavell R.B."/>
            <person name="Feldmann K.A."/>
        </authorList>
    </citation>
    <scope>NUCLEOTIDE SEQUENCE [LARGE SCALE MRNA]</scope>
</reference>
<reference key="6">
    <citation type="journal article" date="1998" name="FEBS Lett.">
        <title>Widespread occurrence of a highly conserved RING-H2 zinc finger motif in the model plant Arabidopsis thaliana.</title>
        <authorList>
            <person name="Jensen R.B."/>
            <person name="Jensen K.L."/>
            <person name="Jespersen H.M."/>
            <person name="Skriver K."/>
        </authorList>
    </citation>
    <scope>NUCLEOTIDE SEQUENCE [MRNA] OF 150-250</scope>
    <source>
        <strain>cv. Columbia</strain>
    </source>
</reference>
<evidence type="ECO:0000250" key="1">
    <source>
        <dbReference type="UniProtKB" id="Q9ZT50"/>
    </source>
</evidence>
<evidence type="ECO:0000255" key="2">
    <source>
        <dbReference type="PROSITE-ProRule" id="PRU00175"/>
    </source>
</evidence>
<evidence type="ECO:0000256" key="3">
    <source>
        <dbReference type="SAM" id="MobiDB-lite"/>
    </source>
</evidence>
<evidence type="ECO:0000303" key="4">
    <source>
    </source>
</evidence>
<evidence type="ECO:0000305" key="5"/>
<evidence type="ECO:0000312" key="6">
    <source>
        <dbReference type="Araport" id="AT1G49850"/>
    </source>
</evidence>
<evidence type="ECO:0000312" key="7">
    <source>
        <dbReference type="EMBL" id="AAG51778.1"/>
    </source>
</evidence>
<dbReference type="EC" id="2.3.2.27"/>
<dbReference type="EMBL" id="AC079674">
    <property type="protein sequence ID" value="AAG51778.1"/>
    <property type="status" value="ALT_SEQ"/>
    <property type="molecule type" value="Genomic_DNA"/>
</dbReference>
<dbReference type="EMBL" id="CP002684">
    <property type="protein sequence ID" value="AEE32483.1"/>
    <property type="molecule type" value="Genomic_DNA"/>
</dbReference>
<dbReference type="EMBL" id="BT004600">
    <property type="protein sequence ID" value="AAO42846.1"/>
    <property type="molecule type" value="mRNA"/>
</dbReference>
<dbReference type="EMBL" id="AK227950">
    <property type="protein sequence ID" value="BAE99918.1"/>
    <property type="molecule type" value="mRNA"/>
</dbReference>
<dbReference type="EMBL" id="AY086250">
    <property type="protein sequence ID" value="AAM64325.1"/>
    <property type="molecule type" value="mRNA"/>
</dbReference>
<dbReference type="EMBL" id="AF079185">
    <property type="protein sequence ID" value="AAC69859.1"/>
    <property type="molecule type" value="mRNA"/>
</dbReference>
<dbReference type="PIR" id="D96535">
    <property type="entry name" value="D96535"/>
</dbReference>
<dbReference type="PIR" id="T51856">
    <property type="entry name" value="T51856"/>
</dbReference>
<dbReference type="RefSeq" id="NP_564556.1">
    <property type="nucleotide sequence ID" value="NM_103872.4"/>
</dbReference>
<dbReference type="SMR" id="Q852U6"/>
<dbReference type="FunCoup" id="Q852U6">
    <property type="interactions" value="429"/>
</dbReference>
<dbReference type="IntAct" id="Q852U6">
    <property type="interactions" value="32"/>
</dbReference>
<dbReference type="STRING" id="3702.Q852U6"/>
<dbReference type="PaxDb" id="3702-AT1G49850.1"/>
<dbReference type="EnsemblPlants" id="AT1G49850.1">
    <property type="protein sequence ID" value="AT1G49850.1"/>
    <property type="gene ID" value="AT1G49850"/>
</dbReference>
<dbReference type="GeneID" id="841408"/>
<dbReference type="Gramene" id="AT1G49850.1">
    <property type="protein sequence ID" value="AT1G49850.1"/>
    <property type="gene ID" value="AT1G49850"/>
</dbReference>
<dbReference type="KEGG" id="ath:AT1G49850"/>
<dbReference type="Araport" id="AT1G49850"/>
<dbReference type="TAIR" id="AT1G49850"/>
<dbReference type="eggNOG" id="KOG0800">
    <property type="taxonomic scope" value="Eukaryota"/>
</dbReference>
<dbReference type="HOGENOM" id="CLU_066967_1_0_1"/>
<dbReference type="InParanoid" id="Q852U6"/>
<dbReference type="OMA" id="HHESDGC"/>
<dbReference type="PhylomeDB" id="Q852U6"/>
<dbReference type="UniPathway" id="UPA00143"/>
<dbReference type="PRO" id="PR:Q852U6"/>
<dbReference type="Proteomes" id="UP000006548">
    <property type="component" value="Chromosome 1"/>
</dbReference>
<dbReference type="ExpressionAtlas" id="Q852U6">
    <property type="expression patterns" value="baseline and differential"/>
</dbReference>
<dbReference type="GO" id="GO:0016740">
    <property type="term" value="F:transferase activity"/>
    <property type="evidence" value="ECO:0007669"/>
    <property type="project" value="UniProtKB-KW"/>
</dbReference>
<dbReference type="GO" id="GO:0008270">
    <property type="term" value="F:zinc ion binding"/>
    <property type="evidence" value="ECO:0007669"/>
    <property type="project" value="UniProtKB-KW"/>
</dbReference>
<dbReference type="GO" id="GO:0016567">
    <property type="term" value="P:protein ubiquitination"/>
    <property type="evidence" value="ECO:0007669"/>
    <property type="project" value="UniProtKB-UniPathway"/>
</dbReference>
<dbReference type="CDD" id="cd16454">
    <property type="entry name" value="RING-H2_PA-TM-RING"/>
    <property type="match status" value="1"/>
</dbReference>
<dbReference type="Gene3D" id="3.30.40.10">
    <property type="entry name" value="Zinc/RING finger domain, C3HC4 (zinc finger)"/>
    <property type="match status" value="1"/>
</dbReference>
<dbReference type="InterPro" id="IPR051834">
    <property type="entry name" value="RING_finger_E3_ligase"/>
</dbReference>
<dbReference type="InterPro" id="IPR001841">
    <property type="entry name" value="Znf_RING"/>
</dbReference>
<dbReference type="InterPro" id="IPR013083">
    <property type="entry name" value="Znf_RING/FYVE/PHD"/>
</dbReference>
<dbReference type="PANTHER" id="PTHR45931:SF3">
    <property type="entry name" value="RING ZINC FINGER-CONTAINING PROTEIN"/>
    <property type="match status" value="1"/>
</dbReference>
<dbReference type="PANTHER" id="PTHR45931">
    <property type="entry name" value="SI:CH211-59O9.10"/>
    <property type="match status" value="1"/>
</dbReference>
<dbReference type="Pfam" id="PF13639">
    <property type="entry name" value="zf-RING_2"/>
    <property type="match status" value="1"/>
</dbReference>
<dbReference type="SMART" id="SM00184">
    <property type="entry name" value="RING"/>
    <property type="match status" value="1"/>
</dbReference>
<dbReference type="SUPFAM" id="SSF57850">
    <property type="entry name" value="RING/U-box"/>
    <property type="match status" value="1"/>
</dbReference>
<dbReference type="PROSITE" id="PS50089">
    <property type="entry name" value="ZF_RING_2"/>
    <property type="match status" value="1"/>
</dbReference>
<feature type="chain" id="PRO_0000436418" description="Probable E3 ubiquitin-protein ligase RHY1A">
    <location>
        <begin position="1"/>
        <end position="250"/>
    </location>
</feature>
<feature type="zinc finger region" description="RING-type; atypical" evidence="2">
    <location>
        <begin position="203"/>
        <end position="244"/>
    </location>
</feature>
<feature type="region of interest" description="Disordered" evidence="3">
    <location>
        <begin position="1"/>
        <end position="106"/>
    </location>
</feature>
<feature type="compositionally biased region" description="Polar residues" evidence="3">
    <location>
        <begin position="1"/>
        <end position="10"/>
    </location>
</feature>
<feature type="compositionally biased region" description="Basic residues" evidence="3">
    <location>
        <begin position="29"/>
        <end position="47"/>
    </location>
</feature>
<feature type="compositionally biased region" description="Basic and acidic residues" evidence="3">
    <location>
        <begin position="48"/>
        <end position="58"/>
    </location>
</feature>
<feature type="compositionally biased region" description="Basic residues" evidence="3">
    <location>
        <begin position="60"/>
        <end position="69"/>
    </location>
</feature>
<feature type="compositionally biased region" description="Basic and acidic residues" evidence="3">
    <location>
        <begin position="71"/>
        <end position="80"/>
    </location>
</feature>
<feature type="compositionally biased region" description="Low complexity" evidence="3">
    <location>
        <begin position="91"/>
        <end position="102"/>
    </location>
</feature>
<feature type="sequence conflict" description="In Ref. 5; AAM64325." evidence="5" ref="5">
    <original>L</original>
    <variation>I</variation>
    <location>
        <position position="64"/>
    </location>
</feature>
<gene>
    <name evidence="4" type="primary">RHY1A</name>
    <name evidence="6" type="ordered locus">At1g49850</name>
    <name evidence="7" type="ORF">F10F5.8</name>
</gene>
<proteinExistence type="evidence at protein level"/>